<name>ABDH_ECOL6</name>
<sequence length="474" mass="50859">MQHKLLINGELVSGEGEKQPVYNPATGDVLLEIAEASAEQVNAAVRAADAAFAEWGQTTPKARAECLLKLADVIEENGQVFAELESRNCGKPLHSAFNDEIPAIVDVFRFFAGAARCLNGLAAGEYLEGHTSMIRRDPLGVVASIAPWNYPLMMAAWKLAPALAAGNCVVLKPSEITPLTALKLAELAKDIFPAGVINVLFGRGKTVGDPLTGHPKVRMVSLTGSIATGEHIISHTAPSIKRTHMELGGKAPVIVFDDADIEAVVEGVRTFGYYNAGQDCTAACRIYAQKGIYDTLVEKLGAAVATLKSGSPDDESTELGPLSSLAHLERVSKAVEEAKATGHIKVITGGEKRKGNGYYYAPTLLAGALQDDAIVQKEVFGPVVSVTLFDNEEQVVNWANDSQYGLASSVWTKDVGRAHRVSARLQYGCTWVNTHFMLVSEMPHGGQKLSGYGKDMSLYGLEDYTVVRHVMVKH</sequence>
<proteinExistence type="inferred from homology"/>
<feature type="chain" id="PRO_0000269694" description="Gamma-aminobutyraldehyde dehydrogenase">
    <location>
        <begin position="1"/>
        <end position="474"/>
    </location>
</feature>
<feature type="active site" evidence="1">
    <location>
        <position position="246"/>
    </location>
</feature>
<feature type="active site" description="Nucleophile" evidence="1">
    <location>
        <position position="280"/>
    </location>
</feature>
<feature type="binding site" evidence="1">
    <location>
        <begin position="146"/>
        <end position="148"/>
    </location>
    <ligand>
        <name>NAD(+)</name>
        <dbReference type="ChEBI" id="CHEBI:57540"/>
    </ligand>
</feature>
<feature type="binding site" evidence="1">
    <location>
        <begin position="172"/>
        <end position="175"/>
    </location>
    <ligand>
        <name>NAD(+)</name>
        <dbReference type="ChEBI" id="CHEBI:57540"/>
    </ligand>
</feature>
<feature type="binding site" evidence="1">
    <location>
        <position position="209"/>
    </location>
    <ligand>
        <name>NAD(+)</name>
        <dbReference type="ChEBI" id="CHEBI:57540"/>
    </ligand>
</feature>
<feature type="binding site" evidence="1">
    <location>
        <begin position="225"/>
        <end position="228"/>
    </location>
    <ligand>
        <name>NAD(+)</name>
        <dbReference type="ChEBI" id="CHEBI:57540"/>
    </ligand>
</feature>
<feature type="binding site" evidence="1">
    <location>
        <position position="280"/>
    </location>
    <ligand>
        <name>NAD(+)</name>
        <dbReference type="ChEBI" id="CHEBI:57540"/>
    </ligand>
</feature>
<protein>
    <recommendedName>
        <fullName evidence="1">Gamma-aminobutyraldehyde dehydrogenase</fullName>
        <shortName evidence="1">ABALDH</shortName>
        <ecNumber evidence="1">1.2.1.19</ecNumber>
    </recommendedName>
    <alternativeName>
        <fullName evidence="1">1-pyrroline dehydrogenase</fullName>
    </alternativeName>
    <alternativeName>
        <fullName evidence="1">4-aminobutanal dehydrogenase</fullName>
    </alternativeName>
    <alternativeName>
        <fullName evidence="1">5-aminopentanal dehydrogenase</fullName>
        <ecNumber evidence="1">1.2.1.-</ecNumber>
    </alternativeName>
</protein>
<accession>Q8FHK7</accession>
<organism>
    <name type="scientific">Escherichia coli O6:H1 (strain CFT073 / ATCC 700928 / UPEC)</name>
    <dbReference type="NCBI Taxonomy" id="199310"/>
    <lineage>
        <taxon>Bacteria</taxon>
        <taxon>Pseudomonadati</taxon>
        <taxon>Pseudomonadota</taxon>
        <taxon>Gammaproteobacteria</taxon>
        <taxon>Enterobacterales</taxon>
        <taxon>Enterobacteriaceae</taxon>
        <taxon>Escherichia</taxon>
    </lineage>
</organism>
<evidence type="ECO:0000255" key="1">
    <source>
        <dbReference type="HAMAP-Rule" id="MF_01275"/>
    </source>
</evidence>
<dbReference type="EC" id="1.2.1.19" evidence="1"/>
<dbReference type="EC" id="1.2.1.-" evidence="1"/>
<dbReference type="EMBL" id="AE014075">
    <property type="protein sequence ID" value="AAN80331.1"/>
    <property type="molecule type" value="Genomic_DNA"/>
</dbReference>
<dbReference type="RefSeq" id="WP_001163909.1">
    <property type="nucleotide sequence ID" value="NZ_CP051263.1"/>
</dbReference>
<dbReference type="SMR" id="Q8FHK7"/>
<dbReference type="STRING" id="199310.c1869"/>
<dbReference type="KEGG" id="ecc:c1869"/>
<dbReference type="eggNOG" id="COG1012">
    <property type="taxonomic scope" value="Bacteria"/>
</dbReference>
<dbReference type="HOGENOM" id="CLU_005391_1_0_6"/>
<dbReference type="BioCyc" id="ECOL199310:C1869-MONOMER"/>
<dbReference type="UniPathway" id="UPA00188">
    <property type="reaction ID" value="UER00292"/>
</dbReference>
<dbReference type="Proteomes" id="UP000001410">
    <property type="component" value="Chromosome"/>
</dbReference>
<dbReference type="GO" id="GO:0019145">
    <property type="term" value="F:aminobutyraldehyde dehydrogenase (NAD+) activity"/>
    <property type="evidence" value="ECO:0007669"/>
    <property type="project" value="UniProtKB-UniRule"/>
</dbReference>
<dbReference type="GO" id="GO:0051287">
    <property type="term" value="F:NAD binding"/>
    <property type="evidence" value="ECO:0007669"/>
    <property type="project" value="UniProtKB-UniRule"/>
</dbReference>
<dbReference type="GO" id="GO:0019477">
    <property type="term" value="P:L-lysine catabolic process"/>
    <property type="evidence" value="ECO:0007669"/>
    <property type="project" value="UniProtKB-UniRule"/>
</dbReference>
<dbReference type="GO" id="GO:0009447">
    <property type="term" value="P:putrescine catabolic process"/>
    <property type="evidence" value="ECO:0007669"/>
    <property type="project" value="UniProtKB-UniRule"/>
</dbReference>
<dbReference type="CDD" id="cd07092">
    <property type="entry name" value="ALDH_ABALDH-YdcW"/>
    <property type="match status" value="1"/>
</dbReference>
<dbReference type="FunFam" id="3.40.605.10:FF:000001">
    <property type="entry name" value="Aldehyde dehydrogenase 1"/>
    <property type="match status" value="1"/>
</dbReference>
<dbReference type="FunFam" id="3.40.309.10:FF:000010">
    <property type="entry name" value="Gamma-aminobutyraldehyde dehydrogenase"/>
    <property type="match status" value="1"/>
</dbReference>
<dbReference type="Gene3D" id="3.40.605.10">
    <property type="entry name" value="Aldehyde Dehydrogenase, Chain A, domain 1"/>
    <property type="match status" value="1"/>
</dbReference>
<dbReference type="Gene3D" id="3.40.309.10">
    <property type="entry name" value="Aldehyde Dehydrogenase, Chain A, domain 2"/>
    <property type="match status" value="1"/>
</dbReference>
<dbReference type="HAMAP" id="MF_01275">
    <property type="entry name" value="Aldedh_Prr"/>
    <property type="match status" value="1"/>
</dbReference>
<dbReference type="InterPro" id="IPR016161">
    <property type="entry name" value="Ald_DH/histidinol_DH"/>
</dbReference>
<dbReference type="InterPro" id="IPR016163">
    <property type="entry name" value="Ald_DH_C"/>
</dbReference>
<dbReference type="InterPro" id="IPR029510">
    <property type="entry name" value="Ald_DH_CS_GLU"/>
</dbReference>
<dbReference type="InterPro" id="IPR016162">
    <property type="entry name" value="Ald_DH_N"/>
</dbReference>
<dbReference type="InterPro" id="IPR015590">
    <property type="entry name" value="Aldehyde_DH_dom"/>
</dbReference>
<dbReference type="InterPro" id="IPR015657">
    <property type="entry name" value="Aminobutyraldehyde_DH"/>
</dbReference>
<dbReference type="InterPro" id="IPR017749">
    <property type="entry name" value="PatD"/>
</dbReference>
<dbReference type="NCBIfam" id="TIGR03374">
    <property type="entry name" value="ABALDH"/>
    <property type="match status" value="1"/>
</dbReference>
<dbReference type="NCBIfam" id="NF010000">
    <property type="entry name" value="PRK13473.1"/>
    <property type="match status" value="1"/>
</dbReference>
<dbReference type="PANTHER" id="PTHR11699">
    <property type="entry name" value="ALDEHYDE DEHYDROGENASE-RELATED"/>
    <property type="match status" value="1"/>
</dbReference>
<dbReference type="Pfam" id="PF00171">
    <property type="entry name" value="Aldedh"/>
    <property type="match status" value="1"/>
</dbReference>
<dbReference type="SUPFAM" id="SSF53720">
    <property type="entry name" value="ALDH-like"/>
    <property type="match status" value="1"/>
</dbReference>
<dbReference type="PROSITE" id="PS00687">
    <property type="entry name" value="ALDEHYDE_DEHYDR_GLU"/>
    <property type="match status" value="1"/>
</dbReference>
<comment type="function">
    <text evidence="1">Catalyzes the oxidation 4-aminobutanal (gamma-aminobutyraldehyde) to 4-aminobutanoate (gamma-aminobutyrate or GABA). This is the second step in one of two pathways for putrescine degradation, where putrescine is converted into 4-aminobutanoate via 4-aminobutanal. Also functions as a 5-aminopentanal dehydrogenase in a a L-lysine degradation pathway to succinate that proceeds via cadaverine, glutarate and L-2-hydroxyglutarate.</text>
</comment>
<comment type="catalytic activity">
    <reaction evidence="1">
        <text>4-aminobutanal + NAD(+) + H2O = 4-aminobutanoate + NADH + 2 H(+)</text>
        <dbReference type="Rhea" id="RHEA:19105"/>
        <dbReference type="ChEBI" id="CHEBI:15377"/>
        <dbReference type="ChEBI" id="CHEBI:15378"/>
        <dbReference type="ChEBI" id="CHEBI:57540"/>
        <dbReference type="ChEBI" id="CHEBI:57945"/>
        <dbReference type="ChEBI" id="CHEBI:58264"/>
        <dbReference type="ChEBI" id="CHEBI:59888"/>
        <dbReference type="EC" id="1.2.1.19"/>
    </reaction>
    <physiologicalReaction direction="left-to-right" evidence="1">
        <dbReference type="Rhea" id="RHEA:19106"/>
    </physiologicalReaction>
</comment>
<comment type="catalytic activity">
    <reaction evidence="1">
        <text>5-aminopentanal + NAD(+) + H2O = 5-aminopentanoate + NADH + 2 H(+)</text>
        <dbReference type="Rhea" id="RHEA:61632"/>
        <dbReference type="ChEBI" id="CHEBI:15377"/>
        <dbReference type="ChEBI" id="CHEBI:15378"/>
        <dbReference type="ChEBI" id="CHEBI:57540"/>
        <dbReference type="ChEBI" id="CHEBI:57945"/>
        <dbReference type="ChEBI" id="CHEBI:144896"/>
        <dbReference type="ChEBI" id="CHEBI:356010"/>
    </reaction>
    <physiologicalReaction direction="left-to-right" evidence="1">
        <dbReference type="Rhea" id="RHEA:61633"/>
    </physiologicalReaction>
</comment>
<comment type="pathway">
    <text evidence="1">Amine and polyamine degradation; putrescine degradation; 4-aminobutanoate from 4-aminobutanal: step 1/1.</text>
</comment>
<comment type="pathway">
    <text evidence="1">Amino-acid degradation.</text>
</comment>
<comment type="subunit">
    <text evidence="1">Homotetramer.</text>
</comment>
<comment type="miscellaneous">
    <text evidence="1">4-aminobutanal can spontaneously cyclize to 1-pyrroline, and 5-aminopentanal to 1-piperideine.</text>
</comment>
<comment type="similarity">
    <text evidence="1">Belongs to the aldehyde dehydrogenase family. Gamma-aminobutyraldehyde dehydrogenase subfamily.</text>
</comment>
<keyword id="KW-0520">NAD</keyword>
<keyword id="KW-0560">Oxidoreductase</keyword>
<keyword id="KW-1185">Reference proteome</keyword>
<reference key="1">
    <citation type="journal article" date="2002" name="Proc. Natl. Acad. Sci. U.S.A.">
        <title>Extensive mosaic structure revealed by the complete genome sequence of uropathogenic Escherichia coli.</title>
        <authorList>
            <person name="Welch R.A."/>
            <person name="Burland V."/>
            <person name="Plunkett G. III"/>
            <person name="Redford P."/>
            <person name="Roesch P."/>
            <person name="Rasko D."/>
            <person name="Buckles E.L."/>
            <person name="Liou S.-R."/>
            <person name="Boutin A."/>
            <person name="Hackett J."/>
            <person name="Stroud D."/>
            <person name="Mayhew G.F."/>
            <person name="Rose D.J."/>
            <person name="Zhou S."/>
            <person name="Schwartz D.C."/>
            <person name="Perna N.T."/>
            <person name="Mobley H.L.T."/>
            <person name="Donnenberg M.S."/>
            <person name="Blattner F.R."/>
        </authorList>
    </citation>
    <scope>NUCLEOTIDE SEQUENCE [LARGE SCALE GENOMIC DNA]</scope>
    <source>
        <strain>CFT073 / ATCC 700928 / UPEC</strain>
    </source>
</reference>
<gene>
    <name evidence="1" type="primary">patD</name>
    <name type="ordered locus">c1869</name>
</gene>